<sequence length="153" mass="17999">LWWLFRDNLLPSVTKFVGYARTKLTVAELKEKCHPYMKVDAAHEEKYDEFWALNFYVAGSYDGRRDFELLNQEIGKFEVGKTANRLFYLRLPPSVFETVTVHIRNTCMGLKGWNRIIVEKPFGRDADSSNKLSEHLAKLFTEDQLYRIDHYLG</sequence>
<dbReference type="EC" id="1.1.1.49" evidence="1"/>
<dbReference type="EMBL" id="U09034">
    <property type="protein sequence ID" value="AAB02778.1"/>
    <property type="molecule type" value="mRNA"/>
</dbReference>
<dbReference type="SMR" id="Q23711"/>
<dbReference type="UniPathway" id="UPA00115">
    <property type="reaction ID" value="UER00408"/>
</dbReference>
<dbReference type="GO" id="GO:0005829">
    <property type="term" value="C:cytosol"/>
    <property type="evidence" value="ECO:0007669"/>
    <property type="project" value="UniProtKB-SubCell"/>
</dbReference>
<dbReference type="GO" id="GO:0004345">
    <property type="term" value="F:glucose-6-phosphate dehydrogenase activity"/>
    <property type="evidence" value="ECO:0000250"/>
    <property type="project" value="UniProtKB"/>
</dbReference>
<dbReference type="GO" id="GO:0050661">
    <property type="term" value="F:NADP binding"/>
    <property type="evidence" value="ECO:0007669"/>
    <property type="project" value="InterPro"/>
</dbReference>
<dbReference type="GO" id="GO:0051156">
    <property type="term" value="P:glucose 6-phosphate metabolic process"/>
    <property type="evidence" value="ECO:0000250"/>
    <property type="project" value="UniProtKB"/>
</dbReference>
<dbReference type="GO" id="GO:0006006">
    <property type="term" value="P:glucose metabolic process"/>
    <property type="evidence" value="ECO:0007669"/>
    <property type="project" value="UniProtKB-KW"/>
</dbReference>
<dbReference type="GO" id="GO:0006739">
    <property type="term" value="P:NADP metabolic process"/>
    <property type="evidence" value="ECO:0000250"/>
    <property type="project" value="UniProtKB"/>
</dbReference>
<dbReference type="GO" id="GO:0009051">
    <property type="term" value="P:pentose-phosphate shunt, oxidative branch"/>
    <property type="evidence" value="ECO:0007669"/>
    <property type="project" value="TreeGrafter"/>
</dbReference>
<dbReference type="Gene3D" id="3.40.50.720">
    <property type="entry name" value="NAD(P)-binding Rossmann-like Domain"/>
    <property type="match status" value="1"/>
</dbReference>
<dbReference type="InterPro" id="IPR001282">
    <property type="entry name" value="G6P_DH"/>
</dbReference>
<dbReference type="InterPro" id="IPR022674">
    <property type="entry name" value="G6P_DH_NAD-bd"/>
</dbReference>
<dbReference type="InterPro" id="IPR036291">
    <property type="entry name" value="NAD(P)-bd_dom_sf"/>
</dbReference>
<dbReference type="PANTHER" id="PTHR23429:SF0">
    <property type="entry name" value="GLUCOSE-6-PHOSPHATE 1-DEHYDROGENASE"/>
    <property type="match status" value="1"/>
</dbReference>
<dbReference type="PANTHER" id="PTHR23429">
    <property type="entry name" value="GLUCOSE-6-PHOSPHATE 1-DEHYDROGENASE G6PD"/>
    <property type="match status" value="1"/>
</dbReference>
<dbReference type="Pfam" id="PF00479">
    <property type="entry name" value="G6PD_N"/>
    <property type="match status" value="1"/>
</dbReference>
<dbReference type="PRINTS" id="PR00079">
    <property type="entry name" value="G6PDHDRGNASE"/>
</dbReference>
<dbReference type="SUPFAM" id="SSF51735">
    <property type="entry name" value="NAD(P)-binding Rossmann-fold domains"/>
    <property type="match status" value="1"/>
</dbReference>
<reference key="1">
    <citation type="journal article" date="1994" name="Ann. Entomol. Soc. Am.">
        <title>Phylogenetic utility of partial DNA sequences of G6PDH at different taxonomic levels in Hexapoda with emphasis on Diptera.</title>
        <authorList>
            <person name="Soto-Adames F.N."/>
            <person name="Robertson H.M."/>
            <person name="Berlocher S.H."/>
        </authorList>
        <dbReference type="AGRICOLA" id="IND20440286"/>
    </citation>
    <scope>NUCLEOTIDE SEQUENCE [MRNA]</scope>
</reference>
<proteinExistence type="evidence at transcript level"/>
<accession>Q23711</accession>
<feature type="chain" id="PRO_0000068091" description="Glucose-6-phosphate 1-dehydrogenase">
    <location>
        <begin position="1" status="less than"/>
        <end position="153" status="greater than"/>
    </location>
</feature>
<feature type="binding site" evidence="1">
    <location>
        <position position="21"/>
    </location>
    <ligand>
        <name>NADP(+)</name>
        <dbReference type="ChEBI" id="CHEBI:58349"/>
        <label>1</label>
    </ligand>
</feature>
<feature type="binding site" evidence="1">
    <location>
        <position position="120"/>
    </location>
    <ligand>
        <name>D-glucose 6-phosphate</name>
        <dbReference type="ChEBI" id="CHEBI:61548"/>
    </ligand>
</feature>
<feature type="binding site" evidence="1">
    <location>
        <position position="120"/>
    </location>
    <ligand>
        <name>NADP(+)</name>
        <dbReference type="ChEBI" id="CHEBI:58349"/>
        <label>1</label>
    </ligand>
</feature>
<feature type="non-terminal residue">
    <location>
        <position position="1"/>
    </location>
</feature>
<feature type="non-terminal residue">
    <location>
        <position position="153"/>
    </location>
</feature>
<organism>
    <name type="scientific">Culex pipiens</name>
    <name type="common">House mosquito</name>
    <dbReference type="NCBI Taxonomy" id="7175"/>
    <lineage>
        <taxon>Eukaryota</taxon>
        <taxon>Metazoa</taxon>
        <taxon>Ecdysozoa</taxon>
        <taxon>Arthropoda</taxon>
        <taxon>Hexapoda</taxon>
        <taxon>Insecta</taxon>
        <taxon>Pterygota</taxon>
        <taxon>Neoptera</taxon>
        <taxon>Endopterygota</taxon>
        <taxon>Diptera</taxon>
        <taxon>Nematocera</taxon>
        <taxon>Culicoidea</taxon>
        <taxon>Culicidae</taxon>
        <taxon>Culicinae</taxon>
        <taxon>Culicini</taxon>
        <taxon>Culex</taxon>
        <taxon>Culex</taxon>
    </lineage>
</organism>
<protein>
    <recommendedName>
        <fullName>Glucose-6-phosphate 1-dehydrogenase</fullName>
        <shortName>G6PD</shortName>
        <ecNumber evidence="1">1.1.1.49</ecNumber>
    </recommendedName>
    <alternativeName>
        <fullName>Zwischenferment</fullName>
    </alternativeName>
</protein>
<evidence type="ECO:0000250" key="1">
    <source>
        <dbReference type="UniProtKB" id="P11413"/>
    </source>
</evidence>
<evidence type="ECO:0000305" key="2"/>
<keyword id="KW-0119">Carbohydrate metabolism</keyword>
<keyword id="KW-0963">Cytoplasm</keyword>
<keyword id="KW-0313">Glucose metabolism</keyword>
<keyword id="KW-0521">NADP</keyword>
<keyword id="KW-0560">Oxidoreductase</keyword>
<comment type="function">
    <text evidence="1">Cytosolic glucose-6-phosphate dehydrogenase that catalyzes the first and rate-limiting step of the oxidative branch within the pentose phosphate pathway/shunt, an alternative route to glycolysis for the dissimilation of carbohydrates and a major source of reducing power and metabolic intermediates for fatty acid and nucleic acid biosynthetic processes.</text>
</comment>
<comment type="catalytic activity">
    <reaction evidence="1">
        <text>D-glucose 6-phosphate + NADP(+) = 6-phospho-D-glucono-1,5-lactone + NADPH + H(+)</text>
        <dbReference type="Rhea" id="RHEA:15841"/>
        <dbReference type="ChEBI" id="CHEBI:15378"/>
        <dbReference type="ChEBI" id="CHEBI:57783"/>
        <dbReference type="ChEBI" id="CHEBI:57955"/>
        <dbReference type="ChEBI" id="CHEBI:58349"/>
        <dbReference type="ChEBI" id="CHEBI:61548"/>
        <dbReference type="EC" id="1.1.1.49"/>
    </reaction>
    <physiologicalReaction direction="left-to-right" evidence="1">
        <dbReference type="Rhea" id="RHEA:15842"/>
    </physiologicalReaction>
</comment>
<comment type="pathway">
    <text evidence="1">Carbohydrate degradation; pentose phosphate pathway; D-ribulose 5-phosphate from D-glucose 6-phosphate (oxidative stage): step 1/3.</text>
</comment>
<comment type="subcellular location">
    <subcellularLocation>
        <location evidence="1">Cytoplasm</location>
        <location evidence="1">Cytosol</location>
    </subcellularLocation>
</comment>
<comment type="similarity">
    <text evidence="2">Belongs to the glucose-6-phosphate dehydrogenase family.</text>
</comment>
<name>G6PD_CULPI</name>
<gene>
    <name type="primary">ZW</name>
</gene>